<sequence>MIRVRFAPSPTGHLHVGGLRTALFNWYFAKKNNGKFILRIEDTDMERSKKEYEDAILEEMKWVGLDYDEGVDKPGEYGPYRQSERLDIYKHYIDQLLNEEKAYFSVTKNDEIIFEGNNLLDKYKKNNDYSVVVKFKVNNDQKISFLDDVRGTIQFDTSNINDFVILRSNGIPVYNFTVVIDDYLMKISHVIRGEDHISNTPKQILIYNALSFELPKFAHLPLILGEDKSPLSKRHGEVSITYFREEGYLPKAILNYLSLLGWNANEQIFDYTEKYQEFDLKKVSRNPSIFDYTKLLWTNEVHLRNDPIEEVHKSFTEWAKYTTVKIDNEDSFVKKIIEASRAKVQTLKQLYEFSKNFFVEEFEYEEEFIEKYMKKPWFKQVIEATIRKLSEIDEYNLANVENTLKEIADLNITSRKNVFQTIRGSLLGRLVTPGLYESIIILGKNESIKRLKRALEFSNTLDINPRR</sequence>
<name>SYE1_PETMO</name>
<organism>
    <name type="scientific">Petrotoga mobilis (strain DSM 10674 / SJ95)</name>
    <dbReference type="NCBI Taxonomy" id="403833"/>
    <lineage>
        <taxon>Bacteria</taxon>
        <taxon>Thermotogati</taxon>
        <taxon>Thermotogota</taxon>
        <taxon>Thermotogae</taxon>
        <taxon>Petrotogales</taxon>
        <taxon>Petrotogaceae</taxon>
        <taxon>Petrotoga</taxon>
    </lineage>
</organism>
<keyword id="KW-0030">Aminoacyl-tRNA synthetase</keyword>
<keyword id="KW-0067">ATP-binding</keyword>
<keyword id="KW-0963">Cytoplasm</keyword>
<keyword id="KW-0436">Ligase</keyword>
<keyword id="KW-0547">Nucleotide-binding</keyword>
<keyword id="KW-0648">Protein biosynthesis</keyword>
<protein>
    <recommendedName>
        <fullName evidence="1">Glutamate--tRNA ligase 1</fullName>
        <ecNumber evidence="1">6.1.1.17</ecNumber>
    </recommendedName>
    <alternativeName>
        <fullName evidence="1">Glutamyl-tRNA synthetase 1</fullName>
        <shortName evidence="1">GluRS 1</shortName>
    </alternativeName>
</protein>
<comment type="function">
    <text evidence="1">Catalyzes the attachment of glutamate to tRNA(Glu) in a two-step reaction: glutamate is first activated by ATP to form Glu-AMP and then transferred to the acceptor end of tRNA(Glu).</text>
</comment>
<comment type="catalytic activity">
    <reaction evidence="1">
        <text>tRNA(Glu) + L-glutamate + ATP = L-glutamyl-tRNA(Glu) + AMP + diphosphate</text>
        <dbReference type="Rhea" id="RHEA:23540"/>
        <dbReference type="Rhea" id="RHEA-COMP:9663"/>
        <dbReference type="Rhea" id="RHEA-COMP:9680"/>
        <dbReference type="ChEBI" id="CHEBI:29985"/>
        <dbReference type="ChEBI" id="CHEBI:30616"/>
        <dbReference type="ChEBI" id="CHEBI:33019"/>
        <dbReference type="ChEBI" id="CHEBI:78442"/>
        <dbReference type="ChEBI" id="CHEBI:78520"/>
        <dbReference type="ChEBI" id="CHEBI:456215"/>
        <dbReference type="EC" id="6.1.1.17"/>
    </reaction>
</comment>
<comment type="subunit">
    <text evidence="1">Monomer.</text>
</comment>
<comment type="subcellular location">
    <subcellularLocation>
        <location evidence="1">Cytoplasm</location>
    </subcellularLocation>
</comment>
<comment type="similarity">
    <text evidence="1">Belongs to the class-I aminoacyl-tRNA synthetase family. Glutamate--tRNA ligase type 1 subfamily.</text>
</comment>
<dbReference type="EC" id="6.1.1.17" evidence="1"/>
<dbReference type="EMBL" id="CP000879">
    <property type="protein sequence ID" value="ABX31326.1"/>
    <property type="molecule type" value="Genomic_DNA"/>
</dbReference>
<dbReference type="SMR" id="A9BJB2"/>
<dbReference type="STRING" id="403833.Pmob_0592"/>
<dbReference type="KEGG" id="pmo:Pmob_0592"/>
<dbReference type="eggNOG" id="COG0008">
    <property type="taxonomic scope" value="Bacteria"/>
</dbReference>
<dbReference type="HOGENOM" id="CLU_015768_6_3_0"/>
<dbReference type="OrthoDB" id="9807503at2"/>
<dbReference type="Proteomes" id="UP000000789">
    <property type="component" value="Chromosome"/>
</dbReference>
<dbReference type="GO" id="GO:0005829">
    <property type="term" value="C:cytosol"/>
    <property type="evidence" value="ECO:0007669"/>
    <property type="project" value="TreeGrafter"/>
</dbReference>
<dbReference type="GO" id="GO:0005524">
    <property type="term" value="F:ATP binding"/>
    <property type="evidence" value="ECO:0007669"/>
    <property type="project" value="UniProtKB-UniRule"/>
</dbReference>
<dbReference type="GO" id="GO:0004818">
    <property type="term" value="F:glutamate-tRNA ligase activity"/>
    <property type="evidence" value="ECO:0007669"/>
    <property type="project" value="UniProtKB-UniRule"/>
</dbReference>
<dbReference type="GO" id="GO:0000049">
    <property type="term" value="F:tRNA binding"/>
    <property type="evidence" value="ECO:0007669"/>
    <property type="project" value="InterPro"/>
</dbReference>
<dbReference type="GO" id="GO:0008270">
    <property type="term" value="F:zinc ion binding"/>
    <property type="evidence" value="ECO:0007669"/>
    <property type="project" value="InterPro"/>
</dbReference>
<dbReference type="GO" id="GO:0006424">
    <property type="term" value="P:glutamyl-tRNA aminoacylation"/>
    <property type="evidence" value="ECO:0007669"/>
    <property type="project" value="UniProtKB-UniRule"/>
</dbReference>
<dbReference type="CDD" id="cd00808">
    <property type="entry name" value="GluRS_core"/>
    <property type="match status" value="1"/>
</dbReference>
<dbReference type="FunFam" id="3.40.50.620:FF:000007">
    <property type="entry name" value="Glutamate--tRNA ligase"/>
    <property type="match status" value="1"/>
</dbReference>
<dbReference type="Gene3D" id="1.10.10.350">
    <property type="match status" value="1"/>
</dbReference>
<dbReference type="Gene3D" id="1.10.8.70">
    <property type="entry name" value="Glutamate-tRNA synthetase, class I, anticodon-binding domain 1"/>
    <property type="match status" value="1"/>
</dbReference>
<dbReference type="Gene3D" id="1.10.1160.10">
    <property type="entry name" value="Glutamyl-trna Synthetase, Domain 2"/>
    <property type="match status" value="1"/>
</dbReference>
<dbReference type="Gene3D" id="3.90.800.10">
    <property type="entry name" value="Glutamyl-tRNA Synthetase, Domain 3"/>
    <property type="match status" value="1"/>
</dbReference>
<dbReference type="Gene3D" id="3.40.50.620">
    <property type="entry name" value="HUPs"/>
    <property type="match status" value="1"/>
</dbReference>
<dbReference type="HAMAP" id="MF_00022">
    <property type="entry name" value="Glu_tRNA_synth_type1"/>
    <property type="match status" value="1"/>
</dbReference>
<dbReference type="InterPro" id="IPR045462">
    <property type="entry name" value="aa-tRNA-synth_I_cd-bd"/>
</dbReference>
<dbReference type="InterPro" id="IPR020751">
    <property type="entry name" value="aa-tRNA-synth_I_codon-bd_sub2"/>
</dbReference>
<dbReference type="InterPro" id="IPR001412">
    <property type="entry name" value="aa-tRNA-synth_I_CS"/>
</dbReference>
<dbReference type="InterPro" id="IPR008925">
    <property type="entry name" value="aa_tRNA-synth_I_cd-bd_sf"/>
</dbReference>
<dbReference type="InterPro" id="IPR004527">
    <property type="entry name" value="Glu-tRNA-ligase_bac/mito"/>
</dbReference>
<dbReference type="InterPro" id="IPR020752">
    <property type="entry name" value="Glu-tRNA-synth_I_codon-bd_sub1"/>
</dbReference>
<dbReference type="InterPro" id="IPR000924">
    <property type="entry name" value="Glu/Gln-tRNA-synth"/>
</dbReference>
<dbReference type="InterPro" id="IPR020058">
    <property type="entry name" value="Glu/Gln-tRNA-synth_Ib_cat-dom"/>
</dbReference>
<dbReference type="InterPro" id="IPR020061">
    <property type="entry name" value="Glu_tRNA_lig_a-bdl"/>
</dbReference>
<dbReference type="InterPro" id="IPR049940">
    <property type="entry name" value="GluQ/Sye"/>
</dbReference>
<dbReference type="InterPro" id="IPR033910">
    <property type="entry name" value="GluRS_core"/>
</dbReference>
<dbReference type="InterPro" id="IPR014729">
    <property type="entry name" value="Rossmann-like_a/b/a_fold"/>
</dbReference>
<dbReference type="NCBIfam" id="TIGR00464">
    <property type="entry name" value="gltX_bact"/>
    <property type="match status" value="1"/>
</dbReference>
<dbReference type="PANTHER" id="PTHR43311">
    <property type="entry name" value="GLUTAMATE--TRNA LIGASE"/>
    <property type="match status" value="1"/>
</dbReference>
<dbReference type="PANTHER" id="PTHR43311:SF2">
    <property type="entry name" value="GLUTAMATE--TRNA LIGASE, MITOCHONDRIAL-RELATED"/>
    <property type="match status" value="1"/>
</dbReference>
<dbReference type="Pfam" id="PF19269">
    <property type="entry name" value="Anticodon_2"/>
    <property type="match status" value="1"/>
</dbReference>
<dbReference type="Pfam" id="PF00749">
    <property type="entry name" value="tRNA-synt_1c"/>
    <property type="match status" value="2"/>
</dbReference>
<dbReference type="PRINTS" id="PR00987">
    <property type="entry name" value="TRNASYNTHGLU"/>
</dbReference>
<dbReference type="SUPFAM" id="SSF48163">
    <property type="entry name" value="An anticodon-binding domain of class I aminoacyl-tRNA synthetases"/>
    <property type="match status" value="1"/>
</dbReference>
<dbReference type="SUPFAM" id="SSF52374">
    <property type="entry name" value="Nucleotidylyl transferase"/>
    <property type="match status" value="1"/>
</dbReference>
<dbReference type="PROSITE" id="PS00178">
    <property type="entry name" value="AA_TRNA_LIGASE_I"/>
    <property type="match status" value="1"/>
</dbReference>
<proteinExistence type="inferred from homology"/>
<accession>A9BJB2</accession>
<gene>
    <name evidence="1" type="primary">gltX1</name>
    <name type="ordered locus">Pmob_0592</name>
</gene>
<feature type="chain" id="PRO_0000367734" description="Glutamate--tRNA ligase 1">
    <location>
        <begin position="1"/>
        <end position="467"/>
    </location>
</feature>
<feature type="short sequence motif" description="'HIGH' region" evidence="1">
    <location>
        <begin position="8"/>
        <end position="18"/>
    </location>
</feature>
<feature type="short sequence motif" description="'KMSKS' region" evidence="1">
    <location>
        <begin position="230"/>
        <end position="234"/>
    </location>
</feature>
<feature type="binding site" evidence="1">
    <location>
        <position position="233"/>
    </location>
    <ligand>
        <name>ATP</name>
        <dbReference type="ChEBI" id="CHEBI:30616"/>
    </ligand>
</feature>
<evidence type="ECO:0000255" key="1">
    <source>
        <dbReference type="HAMAP-Rule" id="MF_00022"/>
    </source>
</evidence>
<reference key="1">
    <citation type="submission" date="2007-11" db="EMBL/GenBank/DDBJ databases">
        <title>Complete sequence of Petroga mobilis SJ95.</title>
        <authorList>
            <consortium name="US DOE Joint Genome Institute"/>
            <person name="Copeland A."/>
            <person name="Lucas S."/>
            <person name="Lapidus A."/>
            <person name="Barry K."/>
            <person name="Glavina del Rio T."/>
            <person name="Dalin E."/>
            <person name="Tice H."/>
            <person name="Pitluck S."/>
            <person name="Meincke L."/>
            <person name="Brettin T."/>
            <person name="Bruce D."/>
            <person name="Detter J.C."/>
            <person name="Han C."/>
            <person name="Kuske C.R."/>
            <person name="Schmutz J."/>
            <person name="Larimer F."/>
            <person name="Land M."/>
            <person name="Hauser L."/>
            <person name="Kyrpides N."/>
            <person name="Mikhailova N."/>
            <person name="Noll K."/>
            <person name="Richardson P."/>
        </authorList>
    </citation>
    <scope>NUCLEOTIDE SEQUENCE [LARGE SCALE GENOMIC DNA]</scope>
    <source>
        <strain>DSM 10674 / SJ95</strain>
    </source>
</reference>